<proteinExistence type="inferred from homology"/>
<name>HTPG_TREDE</name>
<reference key="1">
    <citation type="journal article" date="2004" name="Proc. Natl. Acad. Sci. U.S.A.">
        <title>Comparison of the genome of the oral pathogen Treponema denticola with other spirochete genomes.</title>
        <authorList>
            <person name="Seshadri R."/>
            <person name="Myers G.S.A."/>
            <person name="Tettelin H."/>
            <person name="Eisen J.A."/>
            <person name="Heidelberg J.F."/>
            <person name="Dodson R.J."/>
            <person name="Davidsen T.M."/>
            <person name="DeBoy R.T."/>
            <person name="Fouts D.E."/>
            <person name="Haft D.H."/>
            <person name="Selengut J."/>
            <person name="Ren Q."/>
            <person name="Brinkac L.M."/>
            <person name="Madupu R."/>
            <person name="Kolonay J.F."/>
            <person name="Durkin S.A."/>
            <person name="Daugherty S.C."/>
            <person name="Shetty J."/>
            <person name="Shvartsbeyn A."/>
            <person name="Gebregeorgis E."/>
            <person name="Geer K."/>
            <person name="Tsegaye G."/>
            <person name="Malek J.A."/>
            <person name="Ayodeji B."/>
            <person name="Shatsman S."/>
            <person name="McLeod M.P."/>
            <person name="Smajs D."/>
            <person name="Howell J.K."/>
            <person name="Pal S."/>
            <person name="Amin A."/>
            <person name="Vashisth P."/>
            <person name="McNeill T.Z."/>
            <person name="Xiang Q."/>
            <person name="Sodergren E."/>
            <person name="Baca E."/>
            <person name="Weinstock G.M."/>
            <person name="Norris S.J."/>
            <person name="Fraser C.M."/>
            <person name="Paulsen I.T."/>
        </authorList>
    </citation>
    <scope>NUCLEOTIDE SEQUENCE [LARGE SCALE GENOMIC DNA]</scope>
    <source>
        <strain>ATCC 35405 / DSM 14222 / CIP 103919 / JCM 8153 / KCTC 15104</strain>
    </source>
</reference>
<feature type="chain" id="PRO_0000063017" description="Chaperone protein HtpG">
    <location>
        <begin position="1"/>
        <end position="640"/>
    </location>
</feature>
<feature type="region of interest" description="A; substrate-binding" evidence="1">
    <location>
        <begin position="1"/>
        <end position="348"/>
    </location>
</feature>
<feature type="region of interest" description="B" evidence="1">
    <location>
        <begin position="349"/>
        <end position="565"/>
    </location>
</feature>
<feature type="region of interest" description="C" evidence="1">
    <location>
        <begin position="566"/>
        <end position="640"/>
    </location>
</feature>
<organism>
    <name type="scientific">Treponema denticola (strain ATCC 35405 / DSM 14222 / CIP 103919 / JCM 8153 / KCTC 15104)</name>
    <dbReference type="NCBI Taxonomy" id="243275"/>
    <lineage>
        <taxon>Bacteria</taxon>
        <taxon>Pseudomonadati</taxon>
        <taxon>Spirochaetota</taxon>
        <taxon>Spirochaetia</taxon>
        <taxon>Spirochaetales</taxon>
        <taxon>Treponemataceae</taxon>
        <taxon>Treponema</taxon>
    </lineage>
</organism>
<protein>
    <recommendedName>
        <fullName evidence="1">Chaperone protein HtpG</fullName>
    </recommendedName>
    <alternativeName>
        <fullName evidence="1">Heat shock protein HtpG</fullName>
    </alternativeName>
    <alternativeName>
        <fullName evidence="1">High temperature protein G</fullName>
    </alternativeName>
</protein>
<sequence>MAQYKFETEVNQLLSLIIHSLYSNKEIFLRELVSNASDALDKLKYLTLSDEAYKQIKFEPRIDICFDDTANTLTVRDTGLGMNEEDLKNNLGTIARSGTKAFLDQLAAADKKDSNLIGQFGVGFYSAFMAASTIDVISKKAGENDVWKWTSDGKGAYDLEKVDDTAFPIIDGVPEGANGTCVILHLNNEDSEYATRWRIEEIIKTYSDHIAFPIYLHFTEKQYDDKGKVKSEASKTEQINDAGAIWQKPKSELKEEDYFNFYKSLSHDSQEPLLYVHTKAEGTQEYTTLFYVPSKAPFDMFHADYRPGVKLFVKRVFITDDEKELLPTYLRFVRGVIDSEDLPLNVSREILQQNRILSNIKNASVKKLLGEFKKLAENDKEKYNKFIAEFNRPLKEGLYSDYEHREELADLVRFKTTSPEVKEDEWTSFADYVSRMKSDQKAIYYITGEDEKTLRQSPHLEVYKQKGFEVLIMPDEIDDIIIPSLGKYKDWELKAANRAGSDKELNTEEETKEAEKKEKDFKPVLEKIKEVLGDKVKEVRFSKRLSDSPSCIVVDETDPSLQMERMMRAMGQFNTSAVKPILEVNADHPLVQKLKDSKDKEFVEDMSNLLLEQALLVESGELKAPVDFVKRLNRLMTNLK</sequence>
<dbReference type="EMBL" id="AE017226">
    <property type="protein sequence ID" value="AAS12997.1"/>
    <property type="molecule type" value="Genomic_DNA"/>
</dbReference>
<dbReference type="RefSeq" id="NP_973078.1">
    <property type="nucleotide sequence ID" value="NC_002967.9"/>
</dbReference>
<dbReference type="RefSeq" id="WP_010957241.1">
    <property type="nucleotide sequence ID" value="NC_002967.9"/>
</dbReference>
<dbReference type="SMR" id="P61188"/>
<dbReference type="STRING" id="243275.TDE_2480"/>
<dbReference type="PaxDb" id="243275-TDE_2480"/>
<dbReference type="GeneID" id="2741453"/>
<dbReference type="KEGG" id="tde:TDE_2480"/>
<dbReference type="PATRIC" id="fig|243275.7.peg.2346"/>
<dbReference type="eggNOG" id="COG0326">
    <property type="taxonomic scope" value="Bacteria"/>
</dbReference>
<dbReference type="HOGENOM" id="CLU_006684_3_0_12"/>
<dbReference type="OrthoDB" id="9802640at2"/>
<dbReference type="Proteomes" id="UP000008212">
    <property type="component" value="Chromosome"/>
</dbReference>
<dbReference type="GO" id="GO:0005737">
    <property type="term" value="C:cytoplasm"/>
    <property type="evidence" value="ECO:0007669"/>
    <property type="project" value="UniProtKB-SubCell"/>
</dbReference>
<dbReference type="GO" id="GO:0005524">
    <property type="term" value="F:ATP binding"/>
    <property type="evidence" value="ECO:0007669"/>
    <property type="project" value="UniProtKB-UniRule"/>
</dbReference>
<dbReference type="GO" id="GO:0016887">
    <property type="term" value="F:ATP hydrolysis activity"/>
    <property type="evidence" value="ECO:0007669"/>
    <property type="project" value="InterPro"/>
</dbReference>
<dbReference type="GO" id="GO:0140662">
    <property type="term" value="F:ATP-dependent protein folding chaperone"/>
    <property type="evidence" value="ECO:0007669"/>
    <property type="project" value="InterPro"/>
</dbReference>
<dbReference type="GO" id="GO:0051082">
    <property type="term" value="F:unfolded protein binding"/>
    <property type="evidence" value="ECO:0007669"/>
    <property type="project" value="UniProtKB-UniRule"/>
</dbReference>
<dbReference type="CDD" id="cd16927">
    <property type="entry name" value="HATPase_Hsp90-like"/>
    <property type="match status" value="1"/>
</dbReference>
<dbReference type="FunFam" id="3.30.230.80:FF:000002">
    <property type="entry name" value="Molecular chaperone HtpG"/>
    <property type="match status" value="1"/>
</dbReference>
<dbReference type="FunFam" id="3.30.565.10:FF:000009">
    <property type="entry name" value="Molecular chaperone HtpG"/>
    <property type="match status" value="1"/>
</dbReference>
<dbReference type="Gene3D" id="3.30.230.80">
    <property type="match status" value="1"/>
</dbReference>
<dbReference type="Gene3D" id="3.40.50.11260">
    <property type="match status" value="1"/>
</dbReference>
<dbReference type="Gene3D" id="1.20.120.790">
    <property type="entry name" value="Heat shock protein 90, C-terminal domain"/>
    <property type="match status" value="1"/>
</dbReference>
<dbReference type="Gene3D" id="3.30.565.10">
    <property type="entry name" value="Histidine kinase-like ATPase, C-terminal domain"/>
    <property type="match status" value="1"/>
</dbReference>
<dbReference type="HAMAP" id="MF_00505">
    <property type="entry name" value="HSP90"/>
    <property type="match status" value="1"/>
</dbReference>
<dbReference type="InterPro" id="IPR036890">
    <property type="entry name" value="HATPase_C_sf"/>
</dbReference>
<dbReference type="InterPro" id="IPR019805">
    <property type="entry name" value="Heat_shock_protein_90_CS"/>
</dbReference>
<dbReference type="InterPro" id="IPR037196">
    <property type="entry name" value="HSP90_C"/>
</dbReference>
<dbReference type="InterPro" id="IPR001404">
    <property type="entry name" value="Hsp90_fam"/>
</dbReference>
<dbReference type="InterPro" id="IPR020575">
    <property type="entry name" value="Hsp90_N"/>
</dbReference>
<dbReference type="InterPro" id="IPR020568">
    <property type="entry name" value="Ribosomal_Su5_D2-typ_SF"/>
</dbReference>
<dbReference type="NCBIfam" id="NF003555">
    <property type="entry name" value="PRK05218.1"/>
    <property type="match status" value="1"/>
</dbReference>
<dbReference type="PANTHER" id="PTHR11528">
    <property type="entry name" value="HEAT SHOCK PROTEIN 90 FAMILY MEMBER"/>
    <property type="match status" value="1"/>
</dbReference>
<dbReference type="Pfam" id="PF13589">
    <property type="entry name" value="HATPase_c_3"/>
    <property type="match status" value="1"/>
</dbReference>
<dbReference type="Pfam" id="PF00183">
    <property type="entry name" value="HSP90"/>
    <property type="match status" value="1"/>
</dbReference>
<dbReference type="PIRSF" id="PIRSF002583">
    <property type="entry name" value="Hsp90"/>
    <property type="match status" value="1"/>
</dbReference>
<dbReference type="PRINTS" id="PR00775">
    <property type="entry name" value="HEATSHOCK90"/>
</dbReference>
<dbReference type="SUPFAM" id="SSF55874">
    <property type="entry name" value="ATPase domain of HSP90 chaperone/DNA topoisomerase II/histidine kinase"/>
    <property type="match status" value="1"/>
</dbReference>
<dbReference type="SUPFAM" id="SSF110942">
    <property type="entry name" value="HSP90 C-terminal domain"/>
    <property type="match status" value="1"/>
</dbReference>
<dbReference type="SUPFAM" id="SSF54211">
    <property type="entry name" value="Ribosomal protein S5 domain 2-like"/>
    <property type="match status" value="1"/>
</dbReference>
<dbReference type="PROSITE" id="PS00298">
    <property type="entry name" value="HSP90"/>
    <property type="match status" value="1"/>
</dbReference>
<keyword id="KW-0067">ATP-binding</keyword>
<keyword id="KW-0143">Chaperone</keyword>
<keyword id="KW-0963">Cytoplasm</keyword>
<keyword id="KW-0547">Nucleotide-binding</keyword>
<keyword id="KW-1185">Reference proteome</keyword>
<keyword id="KW-0346">Stress response</keyword>
<comment type="function">
    <text evidence="1">Molecular chaperone. Has ATPase activity.</text>
</comment>
<comment type="subunit">
    <text evidence="1">Homodimer.</text>
</comment>
<comment type="subcellular location">
    <subcellularLocation>
        <location evidence="1">Cytoplasm</location>
    </subcellularLocation>
</comment>
<comment type="similarity">
    <text evidence="1">Belongs to the heat shock protein 90 family.</text>
</comment>
<accession>P61188</accession>
<evidence type="ECO:0000255" key="1">
    <source>
        <dbReference type="HAMAP-Rule" id="MF_00505"/>
    </source>
</evidence>
<gene>
    <name evidence="1" type="primary">htpG</name>
    <name type="ordered locus">TDE_2480</name>
</gene>